<evidence type="ECO:0000255" key="1">
    <source>
        <dbReference type="HAMAP-Rule" id="MF_01109"/>
    </source>
</evidence>
<evidence type="ECO:0000269" key="2">
    <source>
    </source>
</evidence>
<evidence type="ECO:0000269" key="3">
    <source>
    </source>
</evidence>
<evidence type="ECO:0000269" key="4">
    <source>
    </source>
</evidence>
<evidence type="ECO:0000269" key="5">
    <source>
    </source>
</evidence>
<evidence type="ECO:0000269" key="6">
    <source>
    </source>
</evidence>
<evidence type="ECO:0000269" key="7">
    <source>
    </source>
</evidence>
<evidence type="ECO:0000269" key="8">
    <source>
    </source>
</evidence>
<evidence type="ECO:0000269" key="9">
    <source>
    </source>
</evidence>
<evidence type="ECO:0000269" key="10">
    <source ref="11"/>
</evidence>
<evidence type="ECO:0000303" key="11">
    <source>
    </source>
</evidence>
<evidence type="ECO:0000303" key="12">
    <source>
    </source>
</evidence>
<evidence type="ECO:0000305" key="13"/>
<evidence type="ECO:0000305" key="14">
    <source>
    </source>
</evidence>
<evidence type="ECO:0000305" key="15">
    <source>
    </source>
</evidence>
<evidence type="ECO:0000305" key="16">
    <source>
    </source>
</evidence>
<evidence type="ECO:0000305" key="17">
    <source>
    </source>
</evidence>
<evidence type="ECO:0000305" key="18">
    <source>
    </source>
</evidence>
<evidence type="ECO:0007829" key="19">
    <source>
        <dbReference type="PDB" id="1DXH"/>
    </source>
</evidence>
<evidence type="ECO:0007829" key="20">
    <source>
        <dbReference type="PDB" id="1ORT"/>
    </source>
</evidence>
<sequence>MAFNMHNRNLLSLMHHSTRELRYLLDLSRDLKRAKYTGTEQQHLKRKNIALIFEKTSTRTRCAFEVAAYDQGANVTYIDPNSSQIGHKESMKDTARVLGRMYDAIEYRGFKQEIVEELAKFAGVPVFNGLTDEYHPTQMLADVLTMREHSDKPLHDISYAYLGDARNNMGNSLLLIGAKLGMDVRIAAPKALWPHDEFVAQCKKFAEESGAKLTLTEDPKEAVKGVDFVHTDVWVSMGEPVEAWGERIKELLPYQVNMEIMKATGNPRAKFMHCLPAFHNSETKVGKQIAEQYPNLANGIEVTEDVFESPYNIAFEQAENRMHTIKAILVSTLADI</sequence>
<gene>
    <name evidence="11" type="primary">arcB</name>
    <name type="ordered locus">PA5172</name>
</gene>
<proteinExistence type="evidence at protein level"/>
<keyword id="KW-0002">3D-structure</keyword>
<keyword id="KW-0056">Arginine metabolism</keyword>
<keyword id="KW-0963">Cytoplasm</keyword>
<keyword id="KW-0903">Direct protein sequencing</keyword>
<keyword id="KW-1185">Reference proteome</keyword>
<keyword id="KW-0808">Transferase</keyword>
<comment type="function">
    <text evidence="4 6 14 15 18">Involved in the catabolism of arginine. Catalyzes the phosphorolysis of citrulline, the reverse reaction of the biosynthetic one, yielding ornithine and carbamoyl phosphate which serve to generate ATP from ADP (PubMed:2118516, PubMed:4962140). This catabolic OTCase does not carry out the biosynthetic reaction because of a poor affinity and a marked cooperativity for carbamoyl phosphate (PubMed:2118516).</text>
</comment>
<comment type="catalytic activity">
    <reaction evidence="1">
        <text>carbamoyl phosphate + L-ornithine = L-citrulline + phosphate + H(+)</text>
        <dbReference type="Rhea" id="RHEA:19513"/>
        <dbReference type="ChEBI" id="CHEBI:15378"/>
        <dbReference type="ChEBI" id="CHEBI:43474"/>
        <dbReference type="ChEBI" id="CHEBI:46911"/>
        <dbReference type="ChEBI" id="CHEBI:57743"/>
        <dbReference type="ChEBI" id="CHEBI:58228"/>
        <dbReference type="EC" id="2.1.3.3"/>
    </reaction>
</comment>
<comment type="activity regulation">
    <text evidence="9">Inhibited by 2-aminopentanoic acid (norvaline). Activated by phosphate and nucleoside monophosphates such as AMP, GMP, CMP, UMP. Allosterically inhibited by the polyamines such as spermidine and putrescine.</text>
</comment>
<comment type="biophysicochemical properties">
    <phDependence>
        <text evidence="6">Optimum pH is 7.3.</text>
    </phDependence>
</comment>
<comment type="pathway">
    <text evidence="14 16 17">Amino-acid degradation; L-arginine degradation via ADI pathway; carbamoyl phosphate from L-arginine: step 2/2.</text>
</comment>
<comment type="subunit">
    <text evidence="2 5 8 10">Nonameric or dodecamer (tetramer of trimers).</text>
</comment>
<comment type="subcellular location">
    <subcellularLocation>
        <location evidence="13">Cytoplasm</location>
    </subcellularLocation>
</comment>
<comment type="induction">
    <text evidence="7 15">During limiting aeration and in the presence of arginine.</text>
</comment>
<comment type="disruption phenotype">
    <text evidence="3">Cells lacking this gene are blocked in the arginine deiminase pathway.</text>
</comment>
<comment type="miscellaneous">
    <text evidence="18">Proceeds by an ordered sequential mechanism with CP identified as the initial reactant.</text>
</comment>
<comment type="similarity">
    <text evidence="13">Belongs to the aspartate/ornithine carbamoyltransferase superfamily. OTCase family.</text>
</comment>
<name>OTCC_PSEAE</name>
<reference key="1">
    <citation type="journal article" date="1987" name="Eur. J. Biochem.">
        <title>Primary and quaternary structure of the catabolic ornithine carbamoyltransferase from Pseudomonas aeruginosa. Extensive sequence homology with the anabolic ornithine carbamoyltransferases of Escherichia coli.</title>
        <authorList>
            <person name="Baur H."/>
            <person name="Stalon V."/>
            <person name="Falmagne P."/>
            <person name="Luethi E."/>
            <person name="Haas D."/>
        </authorList>
    </citation>
    <scope>NUCLEOTIDE SEQUENCE [GENOMIC DNA]</scope>
    <scope>PROTEIN SEQUENCE OF 2-35</scope>
    <scope>FUNCTION</scope>
    <scope>INDUCTION</scope>
    <scope>SUBUNIT</scope>
    <source>
        <strain>PAO</strain>
    </source>
</reference>
<reference key="2">
    <citation type="journal article" date="2000" name="Nature">
        <title>Complete genome sequence of Pseudomonas aeruginosa PAO1, an opportunistic pathogen.</title>
        <authorList>
            <person name="Stover C.K."/>
            <person name="Pham X.-Q.T."/>
            <person name="Erwin A.L."/>
            <person name="Mizoguchi S.D."/>
            <person name="Warrener P."/>
            <person name="Hickey M.J."/>
            <person name="Brinkman F.S.L."/>
            <person name="Hufnagle W.O."/>
            <person name="Kowalik D.J."/>
            <person name="Lagrou M."/>
            <person name="Garber R.L."/>
            <person name="Goltry L."/>
            <person name="Tolentino E."/>
            <person name="Westbrock-Wadman S."/>
            <person name="Yuan Y."/>
            <person name="Brody L.L."/>
            <person name="Coulter S.N."/>
            <person name="Folger K.R."/>
            <person name="Kas A."/>
            <person name="Larbig K."/>
            <person name="Lim R.M."/>
            <person name="Smith K.A."/>
            <person name="Spencer D.H."/>
            <person name="Wong G.K.-S."/>
            <person name="Wu Z."/>
            <person name="Paulsen I.T."/>
            <person name="Reizer J."/>
            <person name="Saier M.H. Jr."/>
            <person name="Hancock R.E.W."/>
            <person name="Lory S."/>
            <person name="Olson M.V."/>
        </authorList>
    </citation>
    <scope>NUCLEOTIDE SEQUENCE [LARGE SCALE GENOMIC DNA]</scope>
    <source>
        <strain>ATCC 15692 / DSM 22644 / CIP 104116 / JCM 14847 / LMG 12228 / 1C / PRS 101 / PAO1</strain>
    </source>
</reference>
<reference key="3">
    <citation type="journal article" date="1967" name="Biochim. Biophys. Acta">
        <title>The occurrence of a catabolic and an anabolic ornithine carbamoyltransferase in Pseudomonas.</title>
        <authorList>
            <person name="Stalon V."/>
            <person name="Ramos F."/>
            <person name="Pierard A."/>
            <person name="Wiame J.M."/>
        </authorList>
    </citation>
    <scope>FUNCTION AS A CATABOLIC OTCASE</scope>
    <scope>BIOPHYSICOCHEMICAL PROPERTIES</scope>
    <scope>PATHWAY</scope>
</reference>
<reference key="4">
    <citation type="journal article" date="1979" name="J. Bacteriol.">
        <title>Genetic and physiological characterization of Pseudomonas aeruginosa mutants affected in the catabolic ornithine carbamoyltransferase.</title>
        <authorList>
            <person name="Hass D."/>
            <person name="Evans R."/>
            <person name="Mercenier A."/>
            <person name="Simon J.P."/>
            <person name="Stalon V."/>
        </authorList>
    </citation>
    <scope>FUNCTION</scope>
    <scope>DISRUPTION PHENOTYPE</scope>
    <scope>PATHWAY</scope>
</reference>
<reference key="5">
    <citation type="journal article" date="1980" name="J. Bacteriol.">
        <title>Regulation of enzyme synthesis in the arginine deiminase pathway of Pseudomonas aeruginosa.</title>
        <authorList>
            <person name="Mercenier A."/>
            <person name="Simon J.P."/>
            <person name="Vander Wauven C."/>
            <person name="Haas D."/>
            <person name="Stalon V."/>
        </authorList>
    </citation>
    <scope>INDUCTION</scope>
</reference>
<reference key="6">
    <citation type="journal article" date="1984" name="J. Bacteriol.">
        <title>Pseudomonas aeruginosa mutants affected in anaerobic growth on arginine: evidence for a four-gene cluster encoding the arginine deiminase pathway.</title>
        <authorList>
            <person name="Vander Wauven C."/>
            <person name="Pierard A."/>
            <person name="Kley-Raymann M."/>
            <person name="Haas D."/>
        </authorList>
    </citation>
    <scope>PATHWAY</scope>
</reference>
<reference key="7">
    <citation type="journal article" date="1990" name="J. Biol. Chem.">
        <title>Converting catabolic ornithine carbamoyltransferase to an anabolic enzyme.</title>
        <authorList>
            <person name="Baur H."/>
            <person name="Tricot C."/>
            <person name="Stalon V."/>
            <person name="Haas D."/>
        </authorList>
    </citation>
    <scope>FUNCTION</scope>
    <scope>MUTAGENESIS OF GLU-106</scope>
</reference>
<reference key="8">
    <citation type="journal article" date="1993" name="Eur. J. Biochem.">
        <title>Steady-state kinetics and analysis of pH dependence on wild-type and a modified allosteric Pseudomonas aeruginosa ornithine carbamoyltransferase containing the replacement of glutamate 105 by alanine.</title>
        <authorList>
            <person name="Tricot C."/>
            <person name="Nguyen V.T."/>
            <person name="Stalon V."/>
        </authorList>
    </citation>
    <scope>FUNCTION</scope>
    <scope>MUTAGENESIS OF GLU-106</scope>
    <scope>ACTIVITY REGULATION</scope>
    <scope>REACTION MECHANISM</scope>
</reference>
<reference key="9">
    <citation type="journal article" date="1999" name="Acta Crystallogr. D">
        <title>Purification, crystallization and preliminary X-ray analysis of catabolic ornithine carbamoyltransferase from Pseudomonas aeruginosa.</title>
        <authorList>
            <person name="Sainz G."/>
            <person name="Vicat J."/>
            <person name="Kahn R."/>
            <person name="Tricot C."/>
            <person name="Stalon V."/>
            <person name="Dideberg O."/>
        </authorList>
    </citation>
    <scope>SUBUNIT</scope>
</reference>
<reference key="10">
    <citation type="journal article" date="1995" name="Proc. Natl. Acad. Sci. U.S.A.">
        <title>Crystal structure of Pseudomonas aeruginosa catabolic ornithine transcarbamoylase at 3.0-A resolution: a different oligomeric organization in the transcarbamoylase family.</title>
        <authorList>
            <person name="Villeret V."/>
            <person name="Tricot C."/>
            <person name="Stalon V."/>
            <person name="Dideberg O."/>
        </authorList>
    </citation>
    <scope>X-RAY CRYSTALLOGRAPHY (3.0 ANGSTROMS) OF MUTANT GLY-106</scope>
    <scope>MUTAGENESIS OF GLU-106</scope>
    <scope>SUBUNIT</scope>
</reference>
<reference key="11">
    <citation type="submission" date="2000-01" db="PDB data bank">
        <title>Catabolic ornithine carbamoyltransferase from Pseudomonas aeruginosa.</title>
        <authorList>
            <person name="Sainz G."/>
            <person name="Vicat J."/>
            <person name="Kahn R."/>
            <person name="Duee E."/>
            <person name="Tricot C."/>
            <person name="Stalon V."/>
            <person name="Dideberg O."/>
        </authorList>
    </citation>
    <scope>X-RAY CRYSTALLOGRAPHY (2.50 ANGSTROMS) OF MUTANT GLY-106</scope>
    <scope>SUBUNIT</scope>
</reference>
<accession>P08308</accession>
<organism>
    <name type="scientific">Pseudomonas aeruginosa (strain ATCC 15692 / DSM 22644 / CIP 104116 / JCM 14847 / LMG 12228 / 1C / PRS 101 / PAO1)</name>
    <dbReference type="NCBI Taxonomy" id="208964"/>
    <lineage>
        <taxon>Bacteria</taxon>
        <taxon>Pseudomonadati</taxon>
        <taxon>Pseudomonadota</taxon>
        <taxon>Gammaproteobacteria</taxon>
        <taxon>Pseudomonadales</taxon>
        <taxon>Pseudomonadaceae</taxon>
        <taxon>Pseudomonas</taxon>
    </lineage>
</organism>
<dbReference type="EC" id="2.1.3.3" evidence="1"/>
<dbReference type="EMBL" id="X05637">
    <property type="protein sequence ID" value="CAA29124.1"/>
    <property type="molecule type" value="Genomic_DNA"/>
</dbReference>
<dbReference type="EMBL" id="AE004091">
    <property type="protein sequence ID" value="AAG08557.1"/>
    <property type="molecule type" value="Genomic_DNA"/>
</dbReference>
<dbReference type="PIR" id="S00032">
    <property type="entry name" value="OWPSCA"/>
</dbReference>
<dbReference type="RefSeq" id="NP_253859.1">
    <property type="nucleotide sequence ID" value="NC_002516.2"/>
</dbReference>
<dbReference type="RefSeq" id="WP_003100031.1">
    <property type="nucleotide sequence ID" value="NZ_QZGE01000002.1"/>
</dbReference>
<dbReference type="PDB" id="1DXH">
    <property type="method" value="X-ray"/>
    <property type="resolution" value="2.50 A"/>
    <property type="chains" value="A=2-336"/>
</dbReference>
<dbReference type="PDB" id="1ORT">
    <property type="method" value="X-ray"/>
    <property type="resolution" value="3.00 A"/>
    <property type="chains" value="A/B/C/D/E/F/G/H/I/J/K/L=2-336"/>
</dbReference>
<dbReference type="PDBsum" id="1DXH"/>
<dbReference type="PDBsum" id="1ORT"/>
<dbReference type="SMR" id="P08308"/>
<dbReference type="FunCoup" id="P08308">
    <property type="interactions" value="554"/>
</dbReference>
<dbReference type="STRING" id="208964.PA5172"/>
<dbReference type="PaxDb" id="208964-PA5172"/>
<dbReference type="GeneID" id="881792"/>
<dbReference type="KEGG" id="pae:PA5172"/>
<dbReference type="PATRIC" id="fig|208964.12.peg.5420"/>
<dbReference type="PseudoCAP" id="PA5172"/>
<dbReference type="HOGENOM" id="CLU_043846_3_1_6"/>
<dbReference type="InParanoid" id="P08308"/>
<dbReference type="OrthoDB" id="9802587at2"/>
<dbReference type="PhylomeDB" id="P08308"/>
<dbReference type="BioCyc" id="PAER208964:G1FZ6-5289-MONOMER"/>
<dbReference type="SABIO-RK" id="P08308"/>
<dbReference type="UniPathway" id="UPA00254">
    <property type="reaction ID" value="UER00365"/>
</dbReference>
<dbReference type="EvolutionaryTrace" id="P08308"/>
<dbReference type="Proteomes" id="UP000002438">
    <property type="component" value="Chromosome"/>
</dbReference>
<dbReference type="GO" id="GO:0005737">
    <property type="term" value="C:cytoplasm"/>
    <property type="evidence" value="ECO:0007669"/>
    <property type="project" value="UniProtKB-SubCell"/>
</dbReference>
<dbReference type="GO" id="GO:0016597">
    <property type="term" value="F:amino acid binding"/>
    <property type="evidence" value="ECO:0007669"/>
    <property type="project" value="InterPro"/>
</dbReference>
<dbReference type="GO" id="GO:0004585">
    <property type="term" value="F:ornithine carbamoyltransferase activity"/>
    <property type="evidence" value="ECO:0000315"/>
    <property type="project" value="PseudoCAP"/>
</dbReference>
<dbReference type="GO" id="GO:0042450">
    <property type="term" value="P:arginine biosynthetic process via ornithine"/>
    <property type="evidence" value="ECO:0000318"/>
    <property type="project" value="GO_Central"/>
</dbReference>
<dbReference type="GO" id="GO:0019547">
    <property type="term" value="P:arginine catabolic process to ornithine"/>
    <property type="evidence" value="ECO:0007669"/>
    <property type="project" value="UniProtKB-UniPathway"/>
</dbReference>
<dbReference type="GO" id="GO:0019546">
    <property type="term" value="P:arginine deiminase pathway"/>
    <property type="evidence" value="ECO:0000315"/>
    <property type="project" value="PseudoCAP"/>
</dbReference>
<dbReference type="GO" id="GO:0019240">
    <property type="term" value="P:citrulline biosynthetic process"/>
    <property type="evidence" value="ECO:0000318"/>
    <property type="project" value="GO_Central"/>
</dbReference>
<dbReference type="GO" id="GO:0006526">
    <property type="term" value="P:L-arginine biosynthetic process"/>
    <property type="evidence" value="ECO:0007669"/>
    <property type="project" value="UniProtKB-UniRule"/>
</dbReference>
<dbReference type="FunFam" id="3.40.50.1370:FF:000003">
    <property type="entry name" value="Ornithine carbamoyltransferase"/>
    <property type="match status" value="1"/>
</dbReference>
<dbReference type="Gene3D" id="3.40.50.1370">
    <property type="entry name" value="Aspartate/ornithine carbamoyltransferase"/>
    <property type="match status" value="2"/>
</dbReference>
<dbReference type="HAMAP" id="MF_01109">
    <property type="entry name" value="OTCase"/>
    <property type="match status" value="1"/>
</dbReference>
<dbReference type="InterPro" id="IPR006132">
    <property type="entry name" value="Asp/Orn_carbamoyltranf_P-bd"/>
</dbReference>
<dbReference type="InterPro" id="IPR006130">
    <property type="entry name" value="Asp/Orn_carbamoylTrfase"/>
</dbReference>
<dbReference type="InterPro" id="IPR036901">
    <property type="entry name" value="Asp/Orn_carbamoylTrfase_sf"/>
</dbReference>
<dbReference type="InterPro" id="IPR006131">
    <property type="entry name" value="Asp_carbamoyltransf_Asp/Orn-bd"/>
</dbReference>
<dbReference type="InterPro" id="IPR002292">
    <property type="entry name" value="Orn/put_carbamltrans"/>
</dbReference>
<dbReference type="InterPro" id="IPR024904">
    <property type="entry name" value="OTCase_ArgI"/>
</dbReference>
<dbReference type="NCBIfam" id="TIGR00658">
    <property type="entry name" value="orni_carb_tr"/>
    <property type="match status" value="1"/>
</dbReference>
<dbReference type="NCBIfam" id="NF002470">
    <property type="entry name" value="PRK01713.1"/>
    <property type="match status" value="1"/>
</dbReference>
<dbReference type="PANTHER" id="PTHR45753:SF2">
    <property type="entry name" value="ORNITHINE CARBAMOYLTRANSFERASE"/>
    <property type="match status" value="1"/>
</dbReference>
<dbReference type="PANTHER" id="PTHR45753">
    <property type="entry name" value="ORNITHINE CARBAMOYLTRANSFERASE, MITOCHONDRIAL"/>
    <property type="match status" value="1"/>
</dbReference>
<dbReference type="Pfam" id="PF00185">
    <property type="entry name" value="OTCace"/>
    <property type="match status" value="1"/>
</dbReference>
<dbReference type="Pfam" id="PF02729">
    <property type="entry name" value="OTCace_N"/>
    <property type="match status" value="1"/>
</dbReference>
<dbReference type="PRINTS" id="PR00100">
    <property type="entry name" value="AOTCASE"/>
</dbReference>
<dbReference type="PRINTS" id="PR00102">
    <property type="entry name" value="OTCASE"/>
</dbReference>
<dbReference type="SUPFAM" id="SSF53671">
    <property type="entry name" value="Aspartate/ornithine carbamoyltransferase"/>
    <property type="match status" value="1"/>
</dbReference>
<dbReference type="PROSITE" id="PS00097">
    <property type="entry name" value="CARBAMOYLTRANSFERASE"/>
    <property type="match status" value="1"/>
</dbReference>
<protein>
    <recommendedName>
        <fullName evidence="12">Ornithine carbamoyltransferase, catabolic</fullName>
        <shortName evidence="12">OTCase</shortName>
        <ecNumber evidence="1">2.1.3.3</ecNumber>
    </recommendedName>
</protein>
<feature type="initiator methionine" description="Removed" evidence="5">
    <location>
        <position position="1"/>
    </location>
</feature>
<feature type="chain" id="PRO_0000112986" description="Ornithine carbamoyltransferase, catabolic">
    <location>
        <begin position="2"/>
        <end position="336"/>
    </location>
</feature>
<feature type="binding site" evidence="1">
    <location>
        <begin position="57"/>
        <end position="60"/>
    </location>
    <ligand>
        <name>carbamoyl phosphate</name>
        <dbReference type="ChEBI" id="CHEBI:58228"/>
    </ligand>
</feature>
<feature type="binding site" evidence="1">
    <location>
        <position position="84"/>
    </location>
    <ligand>
        <name>carbamoyl phosphate</name>
        <dbReference type="ChEBI" id="CHEBI:58228"/>
    </ligand>
</feature>
<feature type="binding site" evidence="1">
    <location>
        <position position="108"/>
    </location>
    <ligand>
        <name>carbamoyl phosphate</name>
        <dbReference type="ChEBI" id="CHEBI:58228"/>
    </ligand>
</feature>
<feature type="binding site" evidence="1">
    <location>
        <begin position="135"/>
        <end position="138"/>
    </location>
    <ligand>
        <name>carbamoyl phosphate</name>
        <dbReference type="ChEBI" id="CHEBI:58228"/>
    </ligand>
</feature>
<feature type="binding site" evidence="1">
    <location>
        <position position="168"/>
    </location>
    <ligand>
        <name>L-ornithine</name>
        <dbReference type="ChEBI" id="CHEBI:46911"/>
    </ligand>
</feature>
<feature type="binding site" evidence="1">
    <location>
        <position position="232"/>
    </location>
    <ligand>
        <name>L-ornithine</name>
        <dbReference type="ChEBI" id="CHEBI:46911"/>
    </ligand>
</feature>
<feature type="binding site" evidence="1">
    <location>
        <begin position="236"/>
        <end position="237"/>
    </location>
    <ligand>
        <name>L-ornithine</name>
        <dbReference type="ChEBI" id="CHEBI:46911"/>
    </ligand>
</feature>
<feature type="binding site" evidence="1">
    <location>
        <begin position="274"/>
        <end position="275"/>
    </location>
    <ligand>
        <name>carbamoyl phosphate</name>
        <dbReference type="ChEBI" id="CHEBI:58228"/>
    </ligand>
</feature>
<feature type="binding site" evidence="1">
    <location>
        <position position="321"/>
    </location>
    <ligand>
        <name>carbamoyl phosphate</name>
        <dbReference type="ChEBI" id="CHEBI:58228"/>
    </ligand>
</feature>
<feature type="mutagenesis site" description="Loss of homotropic cooperativity; gain of anabolic activity. Conformational change which modifies the catalytic site. This mutant is blocked in the active R (relaxed) state." evidence="4 8 9">
    <original>E</original>
    <variation>A</variation>
    <variation>G</variation>
    <location>
        <position position="106"/>
    </location>
</feature>
<feature type="strand" evidence="19">
    <location>
        <begin position="10"/>
        <end position="13"/>
    </location>
</feature>
<feature type="helix" evidence="19">
    <location>
        <begin position="18"/>
        <end position="36"/>
    </location>
</feature>
<feature type="strand" evidence="19">
    <location>
        <begin position="48"/>
        <end position="55"/>
    </location>
</feature>
<feature type="helix" evidence="19">
    <location>
        <begin position="58"/>
        <end position="70"/>
    </location>
</feature>
<feature type="strand" evidence="19">
    <location>
        <begin position="74"/>
        <end position="78"/>
    </location>
</feature>
<feature type="turn" evidence="19">
    <location>
        <begin position="80"/>
        <end position="82"/>
    </location>
</feature>
<feature type="turn" evidence="19">
    <location>
        <begin position="85"/>
        <end position="87"/>
    </location>
</feature>
<feature type="helix" evidence="19">
    <location>
        <begin position="91"/>
        <end position="101"/>
    </location>
</feature>
<feature type="strand" evidence="19">
    <location>
        <begin position="103"/>
        <end position="108"/>
    </location>
</feature>
<feature type="helix" evidence="19">
    <location>
        <begin position="112"/>
        <end position="121"/>
    </location>
</feature>
<feature type="strand" evidence="19">
    <location>
        <begin position="122"/>
        <end position="124"/>
    </location>
</feature>
<feature type="strand" evidence="19">
    <location>
        <begin position="126"/>
        <end position="130"/>
    </location>
</feature>
<feature type="helix" evidence="19">
    <location>
        <begin position="136"/>
        <end position="148"/>
    </location>
</feature>
<feature type="helix" evidence="19">
    <location>
        <begin position="154"/>
        <end position="156"/>
    </location>
</feature>
<feature type="strand" evidence="19">
    <location>
        <begin position="158"/>
        <end position="163"/>
    </location>
</feature>
<feature type="helix" evidence="19">
    <location>
        <begin position="168"/>
        <end position="179"/>
    </location>
</feature>
<feature type="strand" evidence="19">
    <location>
        <begin position="183"/>
        <end position="187"/>
    </location>
</feature>
<feature type="helix" evidence="19">
    <location>
        <begin position="190"/>
        <end position="192"/>
    </location>
</feature>
<feature type="helix" evidence="19">
    <location>
        <begin position="196"/>
        <end position="209"/>
    </location>
</feature>
<feature type="strand" evidence="19">
    <location>
        <begin position="212"/>
        <end position="217"/>
    </location>
</feature>
<feature type="helix" evidence="19">
    <location>
        <begin position="219"/>
        <end position="222"/>
    </location>
</feature>
<feature type="turn" evidence="19">
    <location>
        <begin position="223"/>
        <end position="225"/>
    </location>
</feature>
<feature type="strand" evidence="19">
    <location>
        <begin position="227"/>
        <end position="231"/>
    </location>
</feature>
<feature type="strand" evidence="19">
    <location>
        <begin position="237"/>
        <end position="239"/>
    </location>
</feature>
<feature type="helix" evidence="19">
    <location>
        <begin position="241"/>
        <end position="243"/>
    </location>
</feature>
<feature type="helix" evidence="19">
    <location>
        <begin position="245"/>
        <end position="251"/>
    </location>
</feature>
<feature type="helix" evidence="19">
    <location>
        <begin position="252"/>
        <end position="254"/>
    </location>
</feature>
<feature type="helix" evidence="19">
    <location>
        <begin position="258"/>
        <end position="262"/>
    </location>
</feature>
<feature type="strand" evidence="19">
    <location>
        <begin position="270"/>
        <end position="273"/>
    </location>
</feature>
<feature type="strand" evidence="19">
    <location>
        <begin position="280"/>
        <end position="283"/>
    </location>
</feature>
<feature type="helix" evidence="19">
    <location>
        <begin position="284"/>
        <end position="292"/>
    </location>
</feature>
<feature type="helix" evidence="19">
    <location>
        <begin position="294"/>
        <end position="298"/>
    </location>
</feature>
<feature type="strand" evidence="19">
    <location>
        <begin position="299"/>
        <end position="303"/>
    </location>
</feature>
<feature type="helix" evidence="19">
    <location>
        <begin position="304"/>
        <end position="307"/>
    </location>
</feature>
<feature type="strand" evidence="20">
    <location>
        <begin position="309"/>
        <end position="312"/>
    </location>
</feature>
<feature type="helix" evidence="19">
    <location>
        <begin position="314"/>
        <end position="333"/>
    </location>
</feature>